<evidence type="ECO:0000250" key="1"/>
<evidence type="ECO:0000255" key="2">
    <source>
        <dbReference type="PROSITE-ProRule" id="PRU00541"/>
    </source>
</evidence>
<evidence type="ECO:0000255" key="3">
    <source>
        <dbReference type="PROSITE-ProRule" id="PRU00542"/>
    </source>
</evidence>
<evidence type="ECO:0000256" key="4">
    <source>
        <dbReference type="SAM" id="MobiDB-lite"/>
    </source>
</evidence>
<evidence type="ECO:0000305" key="5"/>
<feature type="chain" id="PRO_0000232312" description="ATP-dependent RNA helicase DBP10">
    <location>
        <begin position="1"/>
        <end position="969"/>
    </location>
</feature>
<feature type="domain" description="Helicase ATP-binding" evidence="2">
    <location>
        <begin position="146"/>
        <end position="318"/>
    </location>
</feature>
<feature type="domain" description="Helicase C-terminal" evidence="3">
    <location>
        <begin position="396"/>
        <end position="543"/>
    </location>
</feature>
<feature type="region of interest" description="Disordered" evidence="4">
    <location>
        <begin position="1"/>
        <end position="73"/>
    </location>
</feature>
<feature type="region of interest" description="Disordered" evidence="4">
    <location>
        <begin position="78"/>
        <end position="97"/>
    </location>
</feature>
<feature type="region of interest" description="Disordered" evidence="4">
    <location>
        <begin position="366"/>
        <end position="402"/>
    </location>
</feature>
<feature type="region of interest" description="Disordered" evidence="4">
    <location>
        <begin position="860"/>
        <end position="924"/>
    </location>
</feature>
<feature type="region of interest" description="Disordered" evidence="4">
    <location>
        <begin position="946"/>
        <end position="969"/>
    </location>
</feature>
<feature type="short sequence motif" description="Q motif">
    <location>
        <begin position="115"/>
        <end position="143"/>
    </location>
</feature>
<feature type="short sequence motif" description="DEAD box">
    <location>
        <begin position="266"/>
        <end position="269"/>
    </location>
</feature>
<feature type="compositionally biased region" description="Acidic residues" evidence="4">
    <location>
        <begin position="32"/>
        <end position="59"/>
    </location>
</feature>
<feature type="compositionally biased region" description="Acidic residues" evidence="4">
    <location>
        <begin position="374"/>
        <end position="383"/>
    </location>
</feature>
<feature type="compositionally biased region" description="Basic residues" evidence="4">
    <location>
        <begin position="386"/>
        <end position="398"/>
    </location>
</feature>
<feature type="compositionally biased region" description="Basic and acidic residues" evidence="4">
    <location>
        <begin position="897"/>
        <end position="921"/>
    </location>
</feature>
<feature type="compositionally biased region" description="Basic residues" evidence="4">
    <location>
        <begin position="958"/>
        <end position="969"/>
    </location>
</feature>
<feature type="binding site" evidence="2">
    <location>
        <begin position="159"/>
        <end position="166"/>
    </location>
    <ligand>
        <name>ATP</name>
        <dbReference type="ChEBI" id="CHEBI:30616"/>
    </ligand>
</feature>
<protein>
    <recommendedName>
        <fullName>ATP-dependent RNA helicase DBP10</fullName>
        <ecNumber>3.6.4.13</ecNumber>
    </recommendedName>
</protein>
<keyword id="KW-0067">ATP-binding</keyword>
<keyword id="KW-0347">Helicase</keyword>
<keyword id="KW-0378">Hydrolase</keyword>
<keyword id="KW-0547">Nucleotide-binding</keyword>
<keyword id="KW-0539">Nucleus</keyword>
<keyword id="KW-1185">Reference proteome</keyword>
<keyword id="KW-0690">Ribosome biogenesis</keyword>
<keyword id="KW-0694">RNA-binding</keyword>
<keyword id="KW-0698">rRNA processing</keyword>
<accession>Q6FNA2</accession>
<name>DBP10_CANGA</name>
<comment type="function">
    <text evidence="1">ATP-binding RNA helicase involved in the biogenesis of 60S ribosomal subunits and is required for the normal formation of 25S and 5.8S rRNAs.</text>
</comment>
<comment type="catalytic activity">
    <reaction>
        <text>ATP + H2O = ADP + phosphate + H(+)</text>
        <dbReference type="Rhea" id="RHEA:13065"/>
        <dbReference type="ChEBI" id="CHEBI:15377"/>
        <dbReference type="ChEBI" id="CHEBI:15378"/>
        <dbReference type="ChEBI" id="CHEBI:30616"/>
        <dbReference type="ChEBI" id="CHEBI:43474"/>
        <dbReference type="ChEBI" id="CHEBI:456216"/>
        <dbReference type="EC" id="3.6.4.13"/>
    </reaction>
</comment>
<comment type="subcellular location">
    <subcellularLocation>
        <location evidence="1">Nucleus</location>
        <location evidence="1">Nucleolus</location>
    </subcellularLocation>
</comment>
<comment type="domain">
    <text>The Q motif is unique to and characteristic of the DEAD box family of RNA helicases and controls ATP binding and hydrolysis.</text>
</comment>
<comment type="similarity">
    <text evidence="5">Belongs to the DEAD box helicase family. DDX54/DBP10 subfamily.</text>
</comment>
<gene>
    <name type="primary">DBP10</name>
    <name type="ordered locus">CAGL0K01551g</name>
</gene>
<organism>
    <name type="scientific">Candida glabrata (strain ATCC 2001 / BCRC 20586 / JCM 3761 / NBRC 0622 / NRRL Y-65 / CBS 138)</name>
    <name type="common">Yeast</name>
    <name type="synonym">Nakaseomyces glabratus</name>
    <dbReference type="NCBI Taxonomy" id="284593"/>
    <lineage>
        <taxon>Eukaryota</taxon>
        <taxon>Fungi</taxon>
        <taxon>Dikarya</taxon>
        <taxon>Ascomycota</taxon>
        <taxon>Saccharomycotina</taxon>
        <taxon>Saccharomycetes</taxon>
        <taxon>Saccharomycetales</taxon>
        <taxon>Saccharomycetaceae</taxon>
        <taxon>Nakaseomyces</taxon>
    </lineage>
</organism>
<dbReference type="EC" id="3.6.4.13"/>
<dbReference type="EMBL" id="CR380957">
    <property type="protein sequence ID" value="CAG61253.1"/>
    <property type="molecule type" value="Genomic_DNA"/>
</dbReference>
<dbReference type="RefSeq" id="XP_448292.1">
    <property type="nucleotide sequence ID" value="XM_448292.1"/>
</dbReference>
<dbReference type="SMR" id="Q6FNA2"/>
<dbReference type="FunCoup" id="Q6FNA2">
    <property type="interactions" value="1172"/>
</dbReference>
<dbReference type="STRING" id="284593.Q6FNA2"/>
<dbReference type="EnsemblFungi" id="CAGL0K01551g-T">
    <property type="protein sequence ID" value="CAGL0K01551g-T-p1"/>
    <property type="gene ID" value="CAGL0K01551g"/>
</dbReference>
<dbReference type="KEGG" id="cgr:2890018"/>
<dbReference type="CGD" id="CAL0134057">
    <property type="gene designation" value="CAGL0K01551g"/>
</dbReference>
<dbReference type="VEuPathDB" id="FungiDB:CAGL0K01551g"/>
<dbReference type="eggNOG" id="KOG0337">
    <property type="taxonomic scope" value="Eukaryota"/>
</dbReference>
<dbReference type="HOGENOM" id="CLU_003041_5_1_1"/>
<dbReference type="InParanoid" id="Q6FNA2"/>
<dbReference type="OMA" id="EDQFGMM"/>
<dbReference type="Proteomes" id="UP000002428">
    <property type="component" value="Chromosome K"/>
</dbReference>
<dbReference type="GO" id="GO:0005829">
    <property type="term" value="C:cytosol"/>
    <property type="evidence" value="ECO:0007669"/>
    <property type="project" value="TreeGrafter"/>
</dbReference>
<dbReference type="GO" id="GO:0005730">
    <property type="term" value="C:nucleolus"/>
    <property type="evidence" value="ECO:0007669"/>
    <property type="project" value="UniProtKB-SubCell"/>
</dbReference>
<dbReference type="GO" id="GO:0005524">
    <property type="term" value="F:ATP binding"/>
    <property type="evidence" value="ECO:0007669"/>
    <property type="project" value="UniProtKB-KW"/>
</dbReference>
<dbReference type="GO" id="GO:0016887">
    <property type="term" value="F:ATP hydrolysis activity"/>
    <property type="evidence" value="ECO:0007669"/>
    <property type="project" value="RHEA"/>
</dbReference>
<dbReference type="GO" id="GO:0003723">
    <property type="term" value="F:RNA binding"/>
    <property type="evidence" value="ECO:0007669"/>
    <property type="project" value="UniProtKB-KW"/>
</dbReference>
<dbReference type="GO" id="GO:0003724">
    <property type="term" value="F:RNA helicase activity"/>
    <property type="evidence" value="ECO:0007669"/>
    <property type="project" value="UniProtKB-EC"/>
</dbReference>
<dbReference type="GO" id="GO:0006364">
    <property type="term" value="P:rRNA processing"/>
    <property type="evidence" value="ECO:0007669"/>
    <property type="project" value="UniProtKB-KW"/>
</dbReference>
<dbReference type="CDD" id="cd17959">
    <property type="entry name" value="DEADc_DDX54"/>
    <property type="match status" value="1"/>
</dbReference>
<dbReference type="CDD" id="cd18787">
    <property type="entry name" value="SF2_C_DEAD"/>
    <property type="match status" value="1"/>
</dbReference>
<dbReference type="FunFam" id="3.40.50.300:FF:000865">
    <property type="entry name" value="ATP-dependent RNA helicase DDX54"/>
    <property type="match status" value="1"/>
</dbReference>
<dbReference type="Gene3D" id="3.40.50.300">
    <property type="entry name" value="P-loop containing nucleotide triphosphate hydrolases"/>
    <property type="match status" value="2"/>
</dbReference>
<dbReference type="InterPro" id="IPR012541">
    <property type="entry name" value="DBP10_C"/>
</dbReference>
<dbReference type="InterPro" id="IPR033517">
    <property type="entry name" value="DDX54/DBP10_DEAD-box_helicase"/>
</dbReference>
<dbReference type="InterPro" id="IPR011545">
    <property type="entry name" value="DEAD/DEAH_box_helicase_dom"/>
</dbReference>
<dbReference type="InterPro" id="IPR050079">
    <property type="entry name" value="DEAD_box_RNA_helicase"/>
</dbReference>
<dbReference type="InterPro" id="IPR014001">
    <property type="entry name" value="Helicase_ATP-bd"/>
</dbReference>
<dbReference type="InterPro" id="IPR001650">
    <property type="entry name" value="Helicase_C-like"/>
</dbReference>
<dbReference type="InterPro" id="IPR027417">
    <property type="entry name" value="P-loop_NTPase"/>
</dbReference>
<dbReference type="InterPro" id="IPR000629">
    <property type="entry name" value="RNA-helicase_DEAD-box_CS"/>
</dbReference>
<dbReference type="InterPro" id="IPR014014">
    <property type="entry name" value="RNA_helicase_DEAD_Q_motif"/>
</dbReference>
<dbReference type="PANTHER" id="PTHR47959">
    <property type="entry name" value="ATP-DEPENDENT RNA HELICASE RHLE-RELATED"/>
    <property type="match status" value="1"/>
</dbReference>
<dbReference type="PANTHER" id="PTHR47959:SF8">
    <property type="entry name" value="RNA HELICASE"/>
    <property type="match status" value="1"/>
</dbReference>
<dbReference type="Pfam" id="PF08147">
    <property type="entry name" value="DBP10CT"/>
    <property type="match status" value="1"/>
</dbReference>
<dbReference type="Pfam" id="PF00270">
    <property type="entry name" value="DEAD"/>
    <property type="match status" value="1"/>
</dbReference>
<dbReference type="Pfam" id="PF00271">
    <property type="entry name" value="Helicase_C"/>
    <property type="match status" value="1"/>
</dbReference>
<dbReference type="SMART" id="SM01123">
    <property type="entry name" value="DBP10CT"/>
    <property type="match status" value="1"/>
</dbReference>
<dbReference type="SMART" id="SM00487">
    <property type="entry name" value="DEXDc"/>
    <property type="match status" value="1"/>
</dbReference>
<dbReference type="SMART" id="SM00490">
    <property type="entry name" value="HELICc"/>
    <property type="match status" value="1"/>
</dbReference>
<dbReference type="SUPFAM" id="SSF52540">
    <property type="entry name" value="P-loop containing nucleoside triphosphate hydrolases"/>
    <property type="match status" value="2"/>
</dbReference>
<dbReference type="PROSITE" id="PS00039">
    <property type="entry name" value="DEAD_ATP_HELICASE"/>
    <property type="match status" value="1"/>
</dbReference>
<dbReference type="PROSITE" id="PS51192">
    <property type="entry name" value="HELICASE_ATP_BIND_1"/>
    <property type="match status" value="1"/>
</dbReference>
<dbReference type="PROSITE" id="PS51194">
    <property type="entry name" value="HELICASE_CTER"/>
    <property type="match status" value="1"/>
</dbReference>
<dbReference type="PROSITE" id="PS51195">
    <property type="entry name" value="Q_MOTIF"/>
    <property type="match status" value="1"/>
</dbReference>
<reference key="1">
    <citation type="journal article" date="2004" name="Nature">
        <title>Genome evolution in yeasts.</title>
        <authorList>
            <person name="Dujon B."/>
            <person name="Sherman D."/>
            <person name="Fischer G."/>
            <person name="Durrens P."/>
            <person name="Casaregola S."/>
            <person name="Lafontaine I."/>
            <person name="de Montigny J."/>
            <person name="Marck C."/>
            <person name="Neuveglise C."/>
            <person name="Talla E."/>
            <person name="Goffard N."/>
            <person name="Frangeul L."/>
            <person name="Aigle M."/>
            <person name="Anthouard V."/>
            <person name="Babour A."/>
            <person name="Barbe V."/>
            <person name="Barnay S."/>
            <person name="Blanchin S."/>
            <person name="Beckerich J.-M."/>
            <person name="Beyne E."/>
            <person name="Bleykasten C."/>
            <person name="Boisrame A."/>
            <person name="Boyer J."/>
            <person name="Cattolico L."/>
            <person name="Confanioleri F."/>
            <person name="de Daruvar A."/>
            <person name="Despons L."/>
            <person name="Fabre E."/>
            <person name="Fairhead C."/>
            <person name="Ferry-Dumazet H."/>
            <person name="Groppi A."/>
            <person name="Hantraye F."/>
            <person name="Hennequin C."/>
            <person name="Jauniaux N."/>
            <person name="Joyet P."/>
            <person name="Kachouri R."/>
            <person name="Kerrest A."/>
            <person name="Koszul R."/>
            <person name="Lemaire M."/>
            <person name="Lesur I."/>
            <person name="Ma L."/>
            <person name="Muller H."/>
            <person name="Nicaud J.-M."/>
            <person name="Nikolski M."/>
            <person name="Oztas S."/>
            <person name="Ozier-Kalogeropoulos O."/>
            <person name="Pellenz S."/>
            <person name="Potier S."/>
            <person name="Richard G.-F."/>
            <person name="Straub M.-L."/>
            <person name="Suleau A."/>
            <person name="Swennen D."/>
            <person name="Tekaia F."/>
            <person name="Wesolowski-Louvel M."/>
            <person name="Westhof E."/>
            <person name="Wirth B."/>
            <person name="Zeniou-Meyer M."/>
            <person name="Zivanovic Y."/>
            <person name="Bolotin-Fukuhara M."/>
            <person name="Thierry A."/>
            <person name="Bouchier C."/>
            <person name="Caudron B."/>
            <person name="Scarpelli C."/>
            <person name="Gaillardin C."/>
            <person name="Weissenbach J."/>
            <person name="Wincker P."/>
            <person name="Souciet J.-L."/>
        </authorList>
    </citation>
    <scope>NUCLEOTIDE SEQUENCE [LARGE SCALE GENOMIC DNA]</scope>
    <source>
        <strain>ATCC 2001 / BCRC 20586 / JCM 3761 / NBRC 0622 / NRRL Y-65 / CBS 138</strain>
    </source>
</reference>
<proteinExistence type="inferred from homology"/>
<sequence>MVKNLKRKERDEHESDSDEEIDIAGNLVADGSDSESDDSSDGSDEEVQDVIEYSSDEEEPAKPAKAVKKKVEDKSFPSLELSDDEDEKKKVDNDDDDVNAYFSVNTDAKSKHKKGSFASFGLSKLILVNISKRGFRQPTPIQRKTIPLILQNRDIVGMARTGSGKTAAFVLPMIEKLKTHSSKIGARAIILSPSRELAMQTHSVFKEFSRGTHLRSVLLTGGDSLEDQFGMMMTNPDVIIATPGRFLHLKVEMNLDLKSVEYAVFDEADRLFEMGFQEQLNELLAALPSSRQTLLFSATLPTSLVDFAKAGLVNPVLVRLDAESKISDNLEMLFLSTKNDEREANLLYILQEVIKLPLATPEQIKQLNDNKADDSDESAEEDEDKKRRKRKSFNRKAMPKANELPSEKATVVFVPTRHHVEYLSNLLKDCGYLVSYIYGALDQHARKSQLYNFRIGLTSILVVTDVAARGVDIPMLANVVNYSLPASSKIFIHRVGRTARAGNRGWAYSIVSENELPYLLDLELFLGRKILLTPMYEALERLSKEKWVAEGNDETLFQSPKISYTSRMVLGSCPRLDIEALSELYNNLMKSNFDLDMAKKTALKAEKLYFRTRTSASPESLKRSKEIISSGWDEQNVLFGKNLEKEKNAFLEKLQNRRNKETVFEFTRNPEDEMANLMHRRRRAIAPIQRKAKERKELLEKERMAGLTHALEDEILKGDDAEVGYTVTEDTLKAFEDADTILAEQENASKKKKKTFRDPNFFLSHYAPANEIQDKQLELSGGFINEAAQSAYDLNSDDKVQVHKQTATVKWDKKRKKYVNMNGIDNKKYIIGESGQKIAASFRSGKFDEWSKARKLAPLKTGANESSIPSNLLVDPTRGPGKSGSKLPNGKFKHKLEKAPRLPDKKRDDYHKQKKKVESALERGIAVKGYNNAPAFKSELKSVAQIRKDRKTKENRHAKNARPSKKRKF</sequence>